<evidence type="ECO:0000250" key="1">
    <source>
        <dbReference type="UniProtKB" id="P00420"/>
    </source>
</evidence>
<evidence type="ECO:0000255" key="2"/>
<evidence type="ECO:0000305" key="3"/>
<keyword id="KW-0472">Membrane</keyword>
<keyword id="KW-0496">Mitochondrion</keyword>
<keyword id="KW-0999">Mitochondrion inner membrane</keyword>
<keyword id="KW-1278">Translocase</keyword>
<keyword id="KW-0812">Transmembrane</keyword>
<keyword id="KW-1133">Transmembrane helix</keyword>
<gene>
    <name type="primary">COIII</name>
</gene>
<accession>P69215</accession>
<accession>O47425</accession>
<protein>
    <recommendedName>
        <fullName>Cytochrome c oxidase subunit 3</fullName>
        <ecNumber>7.1.1.9</ecNumber>
    </recommendedName>
    <alternativeName>
        <fullName>Cytochrome c oxidase polypeptide III</fullName>
    </alternativeName>
</protein>
<dbReference type="EC" id="7.1.1.9"/>
<dbReference type="EMBL" id="Y16474">
    <property type="protein sequence ID" value="CAA76253.1"/>
    <property type="molecule type" value="Genomic_DNA"/>
</dbReference>
<dbReference type="PIR" id="H71390">
    <property type="entry name" value="H71390"/>
</dbReference>
<dbReference type="RefSeq" id="NP_007543.1">
    <property type="nucleotide sequence ID" value="NC_001912.1"/>
</dbReference>
<dbReference type="SMR" id="P69215"/>
<dbReference type="GeneID" id="808215"/>
<dbReference type="CTD" id="4514"/>
<dbReference type="GO" id="GO:0005743">
    <property type="term" value="C:mitochondrial inner membrane"/>
    <property type="evidence" value="ECO:0007669"/>
    <property type="project" value="UniProtKB-SubCell"/>
</dbReference>
<dbReference type="GO" id="GO:0004129">
    <property type="term" value="F:cytochrome-c oxidase activity"/>
    <property type="evidence" value="ECO:0007669"/>
    <property type="project" value="UniProtKB-EC"/>
</dbReference>
<dbReference type="GO" id="GO:0006123">
    <property type="term" value="P:mitochondrial electron transport, cytochrome c to oxygen"/>
    <property type="evidence" value="ECO:0007669"/>
    <property type="project" value="TreeGrafter"/>
</dbReference>
<dbReference type="CDD" id="cd01665">
    <property type="entry name" value="Cyt_c_Oxidase_III"/>
    <property type="match status" value="1"/>
</dbReference>
<dbReference type="FunFam" id="1.20.120.80:FF:000002">
    <property type="entry name" value="Cytochrome c oxidase subunit 3"/>
    <property type="match status" value="1"/>
</dbReference>
<dbReference type="Gene3D" id="1.10.287.70">
    <property type="match status" value="1"/>
</dbReference>
<dbReference type="Gene3D" id="1.20.120.80">
    <property type="entry name" value="Cytochrome c oxidase, subunit III, four-helix bundle"/>
    <property type="match status" value="1"/>
</dbReference>
<dbReference type="InterPro" id="IPR024791">
    <property type="entry name" value="Cyt_c/ubiquinol_Oxase_su3"/>
</dbReference>
<dbReference type="InterPro" id="IPR033945">
    <property type="entry name" value="Cyt_c_oxase_su3_dom"/>
</dbReference>
<dbReference type="InterPro" id="IPR000298">
    <property type="entry name" value="Cyt_c_oxidase-like_su3"/>
</dbReference>
<dbReference type="InterPro" id="IPR035973">
    <property type="entry name" value="Cyt_c_oxidase_su3-like_sf"/>
</dbReference>
<dbReference type="InterPro" id="IPR013833">
    <property type="entry name" value="Cyt_c_oxidase_su3_a-hlx"/>
</dbReference>
<dbReference type="PANTHER" id="PTHR11403:SF7">
    <property type="entry name" value="CYTOCHROME C OXIDASE SUBUNIT 3"/>
    <property type="match status" value="1"/>
</dbReference>
<dbReference type="PANTHER" id="PTHR11403">
    <property type="entry name" value="CYTOCHROME C OXIDASE SUBUNIT III"/>
    <property type="match status" value="1"/>
</dbReference>
<dbReference type="Pfam" id="PF00510">
    <property type="entry name" value="COX3"/>
    <property type="match status" value="1"/>
</dbReference>
<dbReference type="SUPFAM" id="SSF81452">
    <property type="entry name" value="Cytochrome c oxidase subunit III-like"/>
    <property type="match status" value="1"/>
</dbReference>
<dbReference type="PROSITE" id="PS50253">
    <property type="entry name" value="COX3"/>
    <property type="match status" value="1"/>
</dbReference>
<feature type="chain" id="PRO_0000183748" description="Cytochrome c oxidase subunit 3">
    <location>
        <begin position="1"/>
        <end position="262"/>
    </location>
</feature>
<feature type="transmembrane region" description="Helical" evidence="2">
    <location>
        <begin position="11"/>
        <end position="31"/>
    </location>
</feature>
<feature type="transmembrane region" description="Helical" evidence="2">
    <location>
        <begin position="32"/>
        <end position="52"/>
    </location>
</feature>
<feature type="transmembrane region" description="Helical" evidence="2">
    <location>
        <begin position="83"/>
        <end position="103"/>
    </location>
</feature>
<feature type="transmembrane region" description="Helical" evidence="2">
    <location>
        <begin position="125"/>
        <end position="147"/>
    </location>
</feature>
<feature type="transmembrane region" description="Helical" evidence="2">
    <location>
        <begin position="160"/>
        <end position="180"/>
    </location>
</feature>
<feature type="transmembrane region" description="Helical" evidence="2">
    <location>
        <begin position="198"/>
        <end position="218"/>
    </location>
</feature>
<feature type="transmembrane region" description="Helical" evidence="2">
    <location>
        <begin position="240"/>
        <end position="260"/>
    </location>
</feature>
<reference key="1">
    <citation type="journal article" date="1998" name="Nucleic Acids Res.">
        <title>Complete sequence of the amphioxus (Branchiostoma lanceolatum) mitochondrial genome: relations to vertebrates.</title>
        <authorList>
            <person name="Spruyt N."/>
            <person name="Delarbre C."/>
            <person name="Gachelin G."/>
            <person name="Laudet V."/>
        </authorList>
    </citation>
    <scope>NUCLEOTIDE SEQUENCE [GENOMIC DNA]</scope>
</reference>
<comment type="function">
    <text evidence="1">Component of the cytochrome c oxidase, the last enzyme in the mitochondrial electron transport chain which drives oxidative phosphorylation. The respiratory chain contains 3 multisubunit complexes succinate dehydrogenase (complex II, CII), ubiquinol-cytochrome c oxidoreductase (cytochrome b-c1 complex, complex III, CIII) and cytochrome c oxidase (complex IV, CIV), that cooperate to transfer electrons derived from NADH and succinate to molecular oxygen, creating an electrochemical gradient over the inner membrane that drives transmembrane transport and the ATP synthase. Cytochrome c oxidase is the component of the respiratory chain that catalyzes the reduction of oxygen to water. Electrons originating from reduced cytochrome c in the intermembrane space (IMS) are transferred via the dinuclear copper A center (CU(A)) of subunit 2 and heme A of subunit 1 to the active site in subunit 1, a binuclear center (BNC) formed by heme A3 and copper B (CU(B)). The BNC reduces molecular oxygen to 2 water molecules using 4 electrons from cytochrome c in the IMS and 4 protons from the mitochondrial matrix.</text>
</comment>
<comment type="catalytic activity">
    <reaction evidence="1">
        <text>4 Fe(II)-[cytochrome c] + O2 + 8 H(+)(in) = 4 Fe(III)-[cytochrome c] + 2 H2O + 4 H(+)(out)</text>
        <dbReference type="Rhea" id="RHEA:11436"/>
        <dbReference type="Rhea" id="RHEA-COMP:10350"/>
        <dbReference type="Rhea" id="RHEA-COMP:14399"/>
        <dbReference type="ChEBI" id="CHEBI:15377"/>
        <dbReference type="ChEBI" id="CHEBI:15378"/>
        <dbReference type="ChEBI" id="CHEBI:15379"/>
        <dbReference type="ChEBI" id="CHEBI:29033"/>
        <dbReference type="ChEBI" id="CHEBI:29034"/>
        <dbReference type="EC" id="7.1.1.9"/>
    </reaction>
    <physiologicalReaction direction="left-to-right" evidence="1">
        <dbReference type="Rhea" id="RHEA:11437"/>
    </physiologicalReaction>
</comment>
<comment type="subunit">
    <text evidence="1">Component of the cytochrome c oxidase (complex IV, CIV), a multisubunit enzyme composed of a catalytic core of 3 subunits and several supernumerary subunits. The complex exists as a monomer or a dimer and forms supercomplexes (SCs) in the inner mitochondrial membrane with ubiquinol-cytochrome c oxidoreductase (cytochrome b-c1 complex, complex III, CIII).</text>
</comment>
<comment type="subcellular location">
    <subcellularLocation>
        <location evidence="1">Mitochondrion inner membrane</location>
        <topology evidence="1">Multi-pass membrane protein</topology>
    </subcellularLocation>
</comment>
<comment type="similarity">
    <text evidence="3">Belongs to the cytochrome c oxidase subunit 3 family.</text>
</comment>
<organism>
    <name type="scientific">Branchiostoma lanceolatum</name>
    <name type="common">Common lancelet</name>
    <name type="synonym">Amphioxus lanceolatum</name>
    <dbReference type="NCBI Taxonomy" id="7740"/>
    <lineage>
        <taxon>Eukaryota</taxon>
        <taxon>Metazoa</taxon>
        <taxon>Chordata</taxon>
        <taxon>Cephalochordata</taxon>
        <taxon>Leptocardii</taxon>
        <taxon>Amphioxiformes</taxon>
        <taxon>Branchiostomatidae</taxon>
        <taxon>Branchiostoma</taxon>
    </lineage>
</organism>
<geneLocation type="mitochondrion"/>
<proteinExistence type="inferred from homology"/>
<sequence>MTGYQPHPWHLVEPSPWPLVGGSAAFTLTVGLVMWFHYNSISLMILGLVMIVATMIQWWRDVIREATFQGCHTSYVLSGLRRGMVLFIVSEVFFFLAFFWAFFHSSLAPTVELGVTWPPVGVHPLNAFAVPLLNTAVLLSSGVTVTWAHHALMEGKRTEAIQSLAITVMLGLYFTGLQAWEYYEAPFTIADSVYGSTFFVATGFHGLHVIIGSTFLMVCLGRQVFYHYTSSHHFGFEAAAWYWHFVDVVWLFLYVCIYWWGS</sequence>
<name>COX3_BRALA</name>